<feature type="chain" id="PRO_0000155895" description="Ribonuclease Z">
    <location>
        <begin position="1"/>
        <end position="306"/>
    </location>
</feature>
<feature type="active site" description="Proton acceptor" evidence="1">
    <location>
        <position position="67"/>
    </location>
</feature>
<feature type="binding site" evidence="1">
    <location>
        <position position="63"/>
    </location>
    <ligand>
        <name>Zn(2+)</name>
        <dbReference type="ChEBI" id="CHEBI:29105"/>
        <label>1</label>
        <note>catalytic</note>
    </ligand>
</feature>
<feature type="binding site" evidence="1">
    <location>
        <position position="65"/>
    </location>
    <ligand>
        <name>Zn(2+)</name>
        <dbReference type="ChEBI" id="CHEBI:29105"/>
        <label>1</label>
        <note>catalytic</note>
    </ligand>
</feature>
<feature type="binding site" evidence="1">
    <location>
        <position position="67"/>
    </location>
    <ligand>
        <name>Zn(2+)</name>
        <dbReference type="ChEBI" id="CHEBI:29105"/>
        <label>2</label>
        <note>catalytic</note>
    </ligand>
</feature>
<feature type="binding site" evidence="1">
    <location>
        <position position="68"/>
    </location>
    <ligand>
        <name>Zn(2+)</name>
        <dbReference type="ChEBI" id="CHEBI:29105"/>
        <label>2</label>
        <note>catalytic</note>
    </ligand>
</feature>
<feature type="binding site" evidence="1">
    <location>
        <position position="141"/>
    </location>
    <ligand>
        <name>Zn(2+)</name>
        <dbReference type="ChEBI" id="CHEBI:29105"/>
        <label>1</label>
        <note>catalytic</note>
    </ligand>
</feature>
<feature type="binding site" evidence="1">
    <location>
        <position position="211"/>
    </location>
    <ligand>
        <name>Zn(2+)</name>
        <dbReference type="ChEBI" id="CHEBI:29105"/>
        <label>1</label>
        <note>catalytic</note>
    </ligand>
</feature>
<feature type="binding site" evidence="1">
    <location>
        <position position="211"/>
    </location>
    <ligand>
        <name>Zn(2+)</name>
        <dbReference type="ChEBI" id="CHEBI:29105"/>
        <label>2</label>
        <note>catalytic</note>
    </ligand>
</feature>
<feature type="binding site" evidence="1">
    <location>
        <position position="269"/>
    </location>
    <ligand>
        <name>Zn(2+)</name>
        <dbReference type="ChEBI" id="CHEBI:29105"/>
        <label>2</label>
        <note>catalytic</note>
    </ligand>
</feature>
<sequence length="306" mass="34583">MEVTFFGTSAGLPTKERNTQAIALNLEPYSNSIWLFDVGEGTQHQILHHAIKLGKVTHIFITHMHGDHIFGLPGLLSSRSFQGGEQKPLTLVGPKGIKAYVEMSMNLSESHLNYPITYIEIDDHLTYHHDGFTVEAHLLNHGIPSYGYRVMAPETTGTINVEALKNIGLEPGPKYQEVKSHDTFEHNGQVYQSKDFRGESKQGPVVAIFGDTKPCSNERVISRDADVMVHEATYIDGEKHLANNYHHSHIEDVFALIKEANVKRTLITHLSNRYNTEDINEIYQILIQNEDTPNFNFVKDFDSFKV</sequence>
<accession>P60197</accession>
<accession>Q99TY9</accession>
<gene>
    <name evidence="1" type="primary">rnz</name>
    <name type="ordered locus">SA1335</name>
</gene>
<proteinExistence type="inferred from homology"/>
<reference key="1">
    <citation type="journal article" date="2001" name="Lancet">
        <title>Whole genome sequencing of meticillin-resistant Staphylococcus aureus.</title>
        <authorList>
            <person name="Kuroda M."/>
            <person name="Ohta T."/>
            <person name="Uchiyama I."/>
            <person name="Baba T."/>
            <person name="Yuzawa H."/>
            <person name="Kobayashi I."/>
            <person name="Cui L."/>
            <person name="Oguchi A."/>
            <person name="Aoki K."/>
            <person name="Nagai Y."/>
            <person name="Lian J.-Q."/>
            <person name="Ito T."/>
            <person name="Kanamori M."/>
            <person name="Matsumaru H."/>
            <person name="Maruyama A."/>
            <person name="Murakami H."/>
            <person name="Hosoyama A."/>
            <person name="Mizutani-Ui Y."/>
            <person name="Takahashi N.K."/>
            <person name="Sawano T."/>
            <person name="Inoue R."/>
            <person name="Kaito C."/>
            <person name="Sekimizu K."/>
            <person name="Hirakawa H."/>
            <person name="Kuhara S."/>
            <person name="Goto S."/>
            <person name="Yabuzaki J."/>
            <person name="Kanehisa M."/>
            <person name="Yamashita A."/>
            <person name="Oshima K."/>
            <person name="Furuya K."/>
            <person name="Yoshino C."/>
            <person name="Shiba T."/>
            <person name="Hattori M."/>
            <person name="Ogasawara N."/>
            <person name="Hayashi H."/>
            <person name="Hiramatsu K."/>
        </authorList>
    </citation>
    <scope>NUCLEOTIDE SEQUENCE [LARGE SCALE GENOMIC DNA]</scope>
    <source>
        <strain>N315</strain>
    </source>
</reference>
<evidence type="ECO:0000255" key="1">
    <source>
        <dbReference type="HAMAP-Rule" id="MF_01818"/>
    </source>
</evidence>
<dbReference type="EC" id="3.1.26.11" evidence="1"/>
<dbReference type="EMBL" id="BA000018">
    <property type="protein sequence ID" value="BAB42597.1"/>
    <property type="molecule type" value="Genomic_DNA"/>
</dbReference>
<dbReference type="PIR" id="H89929">
    <property type="entry name" value="H89929"/>
</dbReference>
<dbReference type="RefSeq" id="WP_000454063.1">
    <property type="nucleotide sequence ID" value="NC_002745.2"/>
</dbReference>
<dbReference type="SMR" id="P60197"/>
<dbReference type="EnsemblBacteria" id="BAB42597">
    <property type="protein sequence ID" value="BAB42597"/>
    <property type="gene ID" value="BAB42597"/>
</dbReference>
<dbReference type="KEGG" id="sau:SA1335"/>
<dbReference type="HOGENOM" id="CLU_031317_2_0_9"/>
<dbReference type="GO" id="GO:0042781">
    <property type="term" value="F:3'-tRNA processing endoribonuclease activity"/>
    <property type="evidence" value="ECO:0007669"/>
    <property type="project" value="UniProtKB-UniRule"/>
</dbReference>
<dbReference type="GO" id="GO:0008270">
    <property type="term" value="F:zinc ion binding"/>
    <property type="evidence" value="ECO:0007669"/>
    <property type="project" value="UniProtKB-UniRule"/>
</dbReference>
<dbReference type="CDD" id="cd07717">
    <property type="entry name" value="RNaseZ_ZiPD-like_MBL-fold"/>
    <property type="match status" value="1"/>
</dbReference>
<dbReference type="FunFam" id="3.60.15.10:FF:000002">
    <property type="entry name" value="Ribonuclease Z"/>
    <property type="match status" value="1"/>
</dbReference>
<dbReference type="Gene3D" id="3.60.15.10">
    <property type="entry name" value="Ribonuclease Z/Hydroxyacylglutathione hydrolase-like"/>
    <property type="match status" value="1"/>
</dbReference>
<dbReference type="HAMAP" id="MF_01818">
    <property type="entry name" value="RNase_Z_BN"/>
    <property type="match status" value="1"/>
</dbReference>
<dbReference type="InterPro" id="IPR036866">
    <property type="entry name" value="RibonucZ/Hydroxyglut_hydro"/>
</dbReference>
<dbReference type="InterPro" id="IPR013471">
    <property type="entry name" value="RNase_Z/BN"/>
</dbReference>
<dbReference type="InterPro" id="IPR027794">
    <property type="entry name" value="tRNase_Z_dom"/>
</dbReference>
<dbReference type="NCBIfam" id="NF000801">
    <property type="entry name" value="PRK00055.1-3"/>
    <property type="match status" value="1"/>
</dbReference>
<dbReference type="NCBIfam" id="TIGR02651">
    <property type="entry name" value="RNase_Z"/>
    <property type="match status" value="1"/>
</dbReference>
<dbReference type="PANTHER" id="PTHR46018">
    <property type="entry name" value="ZINC PHOSPHODIESTERASE ELAC PROTEIN 1"/>
    <property type="match status" value="1"/>
</dbReference>
<dbReference type="PANTHER" id="PTHR46018:SF2">
    <property type="entry name" value="ZINC PHOSPHODIESTERASE ELAC PROTEIN 1"/>
    <property type="match status" value="1"/>
</dbReference>
<dbReference type="Pfam" id="PF13691">
    <property type="entry name" value="Lactamase_B_4"/>
    <property type="match status" value="1"/>
</dbReference>
<dbReference type="SUPFAM" id="SSF56281">
    <property type="entry name" value="Metallo-hydrolase/oxidoreductase"/>
    <property type="match status" value="1"/>
</dbReference>
<organism>
    <name type="scientific">Staphylococcus aureus (strain N315)</name>
    <dbReference type="NCBI Taxonomy" id="158879"/>
    <lineage>
        <taxon>Bacteria</taxon>
        <taxon>Bacillati</taxon>
        <taxon>Bacillota</taxon>
        <taxon>Bacilli</taxon>
        <taxon>Bacillales</taxon>
        <taxon>Staphylococcaceae</taxon>
        <taxon>Staphylococcus</taxon>
    </lineage>
</organism>
<comment type="function">
    <text evidence="1">Zinc phosphodiesterase, which displays some tRNA 3'-processing endonuclease activity. Probably involved in tRNA maturation, by removing a 3'-trailer from precursor tRNA.</text>
</comment>
<comment type="catalytic activity">
    <reaction evidence="1">
        <text>Endonucleolytic cleavage of RNA, removing extra 3' nucleotides from tRNA precursor, generating 3' termini of tRNAs. A 3'-hydroxy group is left at the tRNA terminus and a 5'-phosphoryl group is left at the trailer molecule.</text>
        <dbReference type="EC" id="3.1.26.11"/>
    </reaction>
</comment>
<comment type="cofactor">
    <cofactor evidence="1">
        <name>Zn(2+)</name>
        <dbReference type="ChEBI" id="CHEBI:29105"/>
    </cofactor>
    <text evidence="1">Binds 2 Zn(2+) ions.</text>
</comment>
<comment type="subunit">
    <text evidence="1">Homodimer.</text>
</comment>
<comment type="similarity">
    <text evidence="1">Belongs to the RNase Z family.</text>
</comment>
<keyword id="KW-0255">Endonuclease</keyword>
<keyword id="KW-0378">Hydrolase</keyword>
<keyword id="KW-0479">Metal-binding</keyword>
<keyword id="KW-0540">Nuclease</keyword>
<keyword id="KW-0819">tRNA processing</keyword>
<keyword id="KW-0862">Zinc</keyword>
<protein>
    <recommendedName>
        <fullName evidence="1">Ribonuclease Z</fullName>
        <shortName evidence="1">RNase Z</shortName>
        <ecNumber evidence="1">3.1.26.11</ecNumber>
    </recommendedName>
    <alternativeName>
        <fullName evidence="1">tRNA 3 endonuclease</fullName>
    </alternativeName>
    <alternativeName>
        <fullName evidence="1">tRNase Z</fullName>
    </alternativeName>
</protein>
<name>RNZ_STAAN</name>